<accession>Q3IFT7</accession>
<feature type="chain" id="PRO_0000262412" description="N-succinylglutamate 5-semialdehyde dehydrogenase 1">
    <location>
        <begin position="1"/>
        <end position="489"/>
    </location>
</feature>
<feature type="active site" evidence="1">
    <location>
        <position position="246"/>
    </location>
</feature>
<feature type="active site" evidence="1">
    <location>
        <position position="280"/>
    </location>
</feature>
<feature type="binding site" evidence="1">
    <location>
        <begin position="223"/>
        <end position="228"/>
    </location>
    <ligand>
        <name>NAD(+)</name>
        <dbReference type="ChEBI" id="CHEBI:57540"/>
    </ligand>
</feature>
<keyword id="KW-0056">Arginine metabolism</keyword>
<keyword id="KW-0520">NAD</keyword>
<keyword id="KW-0560">Oxidoreductase</keyword>
<keyword id="KW-1185">Reference proteome</keyword>
<evidence type="ECO:0000255" key="1">
    <source>
        <dbReference type="HAMAP-Rule" id="MF_01174"/>
    </source>
</evidence>
<reference key="1">
    <citation type="journal article" date="2005" name="Genome Res.">
        <title>Coping with cold: the genome of the versatile marine Antarctica bacterium Pseudoalteromonas haloplanktis TAC125.</title>
        <authorList>
            <person name="Medigue C."/>
            <person name="Krin E."/>
            <person name="Pascal G."/>
            <person name="Barbe V."/>
            <person name="Bernsel A."/>
            <person name="Bertin P.N."/>
            <person name="Cheung F."/>
            <person name="Cruveiller S."/>
            <person name="D'Amico S."/>
            <person name="Duilio A."/>
            <person name="Fang G."/>
            <person name="Feller G."/>
            <person name="Ho C."/>
            <person name="Mangenot S."/>
            <person name="Marino G."/>
            <person name="Nilsson J."/>
            <person name="Parrilli E."/>
            <person name="Rocha E.P.C."/>
            <person name="Rouy Z."/>
            <person name="Sekowska A."/>
            <person name="Tutino M.L."/>
            <person name="Vallenet D."/>
            <person name="von Heijne G."/>
            <person name="Danchin A."/>
        </authorList>
    </citation>
    <scope>NUCLEOTIDE SEQUENCE [LARGE SCALE GENOMIC DNA]</scope>
    <source>
        <strain>TAC 125</strain>
    </source>
</reference>
<comment type="function">
    <text evidence="1">Catalyzes the NAD-dependent reduction of succinylglutamate semialdehyde into succinylglutamate.</text>
</comment>
<comment type="catalytic activity">
    <reaction evidence="1">
        <text>N-succinyl-L-glutamate 5-semialdehyde + NAD(+) + H2O = N-succinyl-L-glutamate + NADH + 2 H(+)</text>
        <dbReference type="Rhea" id="RHEA:10812"/>
        <dbReference type="ChEBI" id="CHEBI:15377"/>
        <dbReference type="ChEBI" id="CHEBI:15378"/>
        <dbReference type="ChEBI" id="CHEBI:57540"/>
        <dbReference type="ChEBI" id="CHEBI:57945"/>
        <dbReference type="ChEBI" id="CHEBI:58520"/>
        <dbReference type="ChEBI" id="CHEBI:58763"/>
        <dbReference type="EC" id="1.2.1.71"/>
    </reaction>
</comment>
<comment type="pathway">
    <text evidence="1">Amino-acid degradation; L-arginine degradation via AST pathway; L-glutamate and succinate from L-arginine: step 4/5.</text>
</comment>
<comment type="similarity">
    <text evidence="1">Belongs to the aldehyde dehydrogenase family. AstD subfamily.</text>
</comment>
<gene>
    <name evidence="1" type="primary">astD1</name>
    <name type="ordered locus">PSHAa0196</name>
</gene>
<organism>
    <name type="scientific">Pseudoalteromonas translucida (strain TAC 125)</name>
    <dbReference type="NCBI Taxonomy" id="326442"/>
    <lineage>
        <taxon>Bacteria</taxon>
        <taxon>Pseudomonadati</taxon>
        <taxon>Pseudomonadota</taxon>
        <taxon>Gammaproteobacteria</taxon>
        <taxon>Alteromonadales</taxon>
        <taxon>Pseudoalteromonadaceae</taxon>
        <taxon>Pseudoalteromonas</taxon>
    </lineage>
</organism>
<proteinExistence type="inferred from homology"/>
<sequence length="489" mass="52132">MTHPAQFINGQWSQGQGTEFSSVNPANNNVIFQANSATAEQVDAAVSAAREAFYAWADKTFAERLEIVKAFAAQLKENSEELAITIAQETGKPLWETRTEAGAMVGKIAISEKAFLERTGDVENAMPLGRAMIRHKPHGVVAVFGPYNFPGHLPNGHIVPALLAGNTVIFKPSELTPKVAELTLKLWEKAGLPAGVINLVQGEVATGKALAAHKGIDGLFFTGSSRTGHILHEQFAGQPGKILALEMGGNNPLIITDVEDTKAVVHDIIQSAFISSGQRCTCARKLFLPTGSKGDVILERLITATKAIKVGNYDDADQPFMGSMISSAAAAGMVKAQNELVELGAQVLVELEHTVNTGFVTPGIIECTNISDFPDEEHFGPLLKVFRFDDFDQAIDKANDTSFGLSAGLLSDSAADYEHFLRRIRAGIVNWNRPITGASSAAPFGGIGASGNHRASAYYAADYCAYPVASVELEKVAMPATLSPGLKID</sequence>
<name>ASTD1_PSET1</name>
<dbReference type="EC" id="1.2.1.71" evidence="1"/>
<dbReference type="EMBL" id="CR954246">
    <property type="protein sequence ID" value="CAI85299.1"/>
    <property type="molecule type" value="Genomic_DNA"/>
</dbReference>
<dbReference type="SMR" id="Q3IFT7"/>
<dbReference type="STRING" id="326442.PSHAa0196"/>
<dbReference type="KEGG" id="pha:PSHAa0196"/>
<dbReference type="PATRIC" id="fig|326442.8.peg.189"/>
<dbReference type="eggNOG" id="COG1012">
    <property type="taxonomic scope" value="Bacteria"/>
</dbReference>
<dbReference type="HOGENOM" id="CLU_005391_1_0_6"/>
<dbReference type="BioCyc" id="PHAL326442:PSHA_RS00985-MONOMER"/>
<dbReference type="UniPathway" id="UPA00185">
    <property type="reaction ID" value="UER00282"/>
</dbReference>
<dbReference type="Proteomes" id="UP000006843">
    <property type="component" value="Chromosome I"/>
</dbReference>
<dbReference type="GO" id="GO:0043824">
    <property type="term" value="F:succinylglutamate-semialdehyde dehydrogenase activity"/>
    <property type="evidence" value="ECO:0007669"/>
    <property type="project" value="UniProtKB-EC"/>
</dbReference>
<dbReference type="GO" id="GO:0019544">
    <property type="term" value="P:arginine catabolic process to glutamate"/>
    <property type="evidence" value="ECO:0007669"/>
    <property type="project" value="UniProtKB-UniRule"/>
</dbReference>
<dbReference type="GO" id="GO:0019545">
    <property type="term" value="P:arginine catabolic process to succinate"/>
    <property type="evidence" value="ECO:0007669"/>
    <property type="project" value="UniProtKB-UniRule"/>
</dbReference>
<dbReference type="CDD" id="cd07095">
    <property type="entry name" value="ALDH_SGSD_AstD"/>
    <property type="match status" value="1"/>
</dbReference>
<dbReference type="FunFam" id="3.40.605.10:FF:000010">
    <property type="entry name" value="N-succinylglutamate 5-semialdehyde dehydrogenase"/>
    <property type="match status" value="1"/>
</dbReference>
<dbReference type="Gene3D" id="3.40.605.10">
    <property type="entry name" value="Aldehyde Dehydrogenase, Chain A, domain 1"/>
    <property type="match status" value="1"/>
</dbReference>
<dbReference type="Gene3D" id="3.40.309.10">
    <property type="entry name" value="Aldehyde Dehydrogenase, Chain A, domain 2"/>
    <property type="match status" value="1"/>
</dbReference>
<dbReference type="HAMAP" id="MF_01174">
    <property type="entry name" value="Aldedh_AstD"/>
    <property type="match status" value="1"/>
</dbReference>
<dbReference type="InterPro" id="IPR016161">
    <property type="entry name" value="Ald_DH/histidinol_DH"/>
</dbReference>
<dbReference type="InterPro" id="IPR016163">
    <property type="entry name" value="Ald_DH_C"/>
</dbReference>
<dbReference type="InterPro" id="IPR016160">
    <property type="entry name" value="Ald_DH_CS_CYS"/>
</dbReference>
<dbReference type="InterPro" id="IPR029510">
    <property type="entry name" value="Ald_DH_CS_GLU"/>
</dbReference>
<dbReference type="InterPro" id="IPR016162">
    <property type="entry name" value="Ald_DH_N"/>
</dbReference>
<dbReference type="InterPro" id="IPR015590">
    <property type="entry name" value="Aldehyde_DH_dom"/>
</dbReference>
<dbReference type="InterPro" id="IPR017649">
    <property type="entry name" value="SuccinylGlu_semiald_DH_AstD"/>
</dbReference>
<dbReference type="NCBIfam" id="TIGR03240">
    <property type="entry name" value="arg_catab_astD"/>
    <property type="match status" value="1"/>
</dbReference>
<dbReference type="NCBIfam" id="NF006992">
    <property type="entry name" value="PRK09457.1"/>
    <property type="match status" value="1"/>
</dbReference>
<dbReference type="PANTHER" id="PTHR11699">
    <property type="entry name" value="ALDEHYDE DEHYDROGENASE-RELATED"/>
    <property type="match status" value="1"/>
</dbReference>
<dbReference type="Pfam" id="PF00171">
    <property type="entry name" value="Aldedh"/>
    <property type="match status" value="1"/>
</dbReference>
<dbReference type="SUPFAM" id="SSF53720">
    <property type="entry name" value="ALDH-like"/>
    <property type="match status" value="1"/>
</dbReference>
<dbReference type="PROSITE" id="PS00070">
    <property type="entry name" value="ALDEHYDE_DEHYDR_CYS"/>
    <property type="match status" value="1"/>
</dbReference>
<dbReference type="PROSITE" id="PS00687">
    <property type="entry name" value="ALDEHYDE_DEHYDR_GLU"/>
    <property type="match status" value="1"/>
</dbReference>
<protein>
    <recommendedName>
        <fullName evidence="1">N-succinylglutamate 5-semialdehyde dehydrogenase 1</fullName>
        <ecNumber evidence="1">1.2.1.71</ecNumber>
    </recommendedName>
    <alternativeName>
        <fullName evidence="1">Succinylglutamic semialdehyde dehydrogenase 1</fullName>
        <shortName evidence="1">SGSD 1</shortName>
    </alternativeName>
</protein>